<name>RS12_NITWN</name>
<organism>
    <name type="scientific">Nitrobacter winogradskyi (strain ATCC 25391 / DSM 10237 / CIP 104748 / NCIMB 11846 / Nb-255)</name>
    <dbReference type="NCBI Taxonomy" id="323098"/>
    <lineage>
        <taxon>Bacteria</taxon>
        <taxon>Pseudomonadati</taxon>
        <taxon>Pseudomonadota</taxon>
        <taxon>Alphaproteobacteria</taxon>
        <taxon>Hyphomicrobiales</taxon>
        <taxon>Nitrobacteraceae</taxon>
        <taxon>Nitrobacter</taxon>
    </lineage>
</organism>
<dbReference type="EMBL" id="CP000115">
    <property type="protein sequence ID" value="ABA04620.1"/>
    <property type="molecule type" value="Genomic_DNA"/>
</dbReference>
<dbReference type="RefSeq" id="WP_011314637.1">
    <property type="nucleotide sequence ID" value="NC_007406.1"/>
</dbReference>
<dbReference type="SMR" id="Q3SSX1"/>
<dbReference type="STRING" id="323098.Nwi_1359"/>
<dbReference type="KEGG" id="nwi:Nwi_1359"/>
<dbReference type="eggNOG" id="COG0048">
    <property type="taxonomic scope" value="Bacteria"/>
</dbReference>
<dbReference type="HOGENOM" id="CLU_104295_1_2_5"/>
<dbReference type="OrthoDB" id="9802366at2"/>
<dbReference type="Proteomes" id="UP000002531">
    <property type="component" value="Chromosome"/>
</dbReference>
<dbReference type="GO" id="GO:0015935">
    <property type="term" value="C:small ribosomal subunit"/>
    <property type="evidence" value="ECO:0007669"/>
    <property type="project" value="InterPro"/>
</dbReference>
<dbReference type="GO" id="GO:0019843">
    <property type="term" value="F:rRNA binding"/>
    <property type="evidence" value="ECO:0007669"/>
    <property type="project" value="UniProtKB-UniRule"/>
</dbReference>
<dbReference type="GO" id="GO:0003735">
    <property type="term" value="F:structural constituent of ribosome"/>
    <property type="evidence" value="ECO:0007669"/>
    <property type="project" value="InterPro"/>
</dbReference>
<dbReference type="GO" id="GO:0000049">
    <property type="term" value="F:tRNA binding"/>
    <property type="evidence" value="ECO:0007669"/>
    <property type="project" value="UniProtKB-UniRule"/>
</dbReference>
<dbReference type="GO" id="GO:0006412">
    <property type="term" value="P:translation"/>
    <property type="evidence" value="ECO:0007669"/>
    <property type="project" value="UniProtKB-UniRule"/>
</dbReference>
<dbReference type="CDD" id="cd03368">
    <property type="entry name" value="Ribosomal_S12"/>
    <property type="match status" value="1"/>
</dbReference>
<dbReference type="FunFam" id="2.40.50.140:FF:000001">
    <property type="entry name" value="30S ribosomal protein S12"/>
    <property type="match status" value="1"/>
</dbReference>
<dbReference type="Gene3D" id="2.40.50.140">
    <property type="entry name" value="Nucleic acid-binding proteins"/>
    <property type="match status" value="1"/>
</dbReference>
<dbReference type="HAMAP" id="MF_00403_B">
    <property type="entry name" value="Ribosomal_uS12_B"/>
    <property type="match status" value="1"/>
</dbReference>
<dbReference type="InterPro" id="IPR012340">
    <property type="entry name" value="NA-bd_OB-fold"/>
</dbReference>
<dbReference type="InterPro" id="IPR006032">
    <property type="entry name" value="Ribosomal_uS12"/>
</dbReference>
<dbReference type="InterPro" id="IPR005679">
    <property type="entry name" value="Ribosomal_uS12_bac"/>
</dbReference>
<dbReference type="NCBIfam" id="TIGR00981">
    <property type="entry name" value="rpsL_bact"/>
    <property type="match status" value="1"/>
</dbReference>
<dbReference type="PANTHER" id="PTHR11652">
    <property type="entry name" value="30S RIBOSOMAL PROTEIN S12 FAMILY MEMBER"/>
    <property type="match status" value="1"/>
</dbReference>
<dbReference type="Pfam" id="PF00164">
    <property type="entry name" value="Ribosom_S12_S23"/>
    <property type="match status" value="1"/>
</dbReference>
<dbReference type="PIRSF" id="PIRSF002133">
    <property type="entry name" value="Ribosomal_S12/S23"/>
    <property type="match status" value="1"/>
</dbReference>
<dbReference type="PRINTS" id="PR01034">
    <property type="entry name" value="RIBOSOMALS12"/>
</dbReference>
<dbReference type="SUPFAM" id="SSF50249">
    <property type="entry name" value="Nucleic acid-binding proteins"/>
    <property type="match status" value="1"/>
</dbReference>
<dbReference type="PROSITE" id="PS00055">
    <property type="entry name" value="RIBOSOMAL_S12"/>
    <property type="match status" value="1"/>
</dbReference>
<keyword id="KW-0488">Methylation</keyword>
<keyword id="KW-1185">Reference proteome</keyword>
<keyword id="KW-0687">Ribonucleoprotein</keyword>
<keyword id="KW-0689">Ribosomal protein</keyword>
<keyword id="KW-0694">RNA-binding</keyword>
<keyword id="KW-0699">rRNA-binding</keyword>
<keyword id="KW-0820">tRNA-binding</keyword>
<reference key="1">
    <citation type="journal article" date="2006" name="Appl. Environ. Microbiol.">
        <title>Genome sequence of the chemolithoautotrophic nitrite-oxidizing bacterium Nitrobacter winogradskyi Nb-255.</title>
        <authorList>
            <person name="Starkenburg S.R."/>
            <person name="Chain P.S.G."/>
            <person name="Sayavedra-Soto L.A."/>
            <person name="Hauser L."/>
            <person name="Land M.L."/>
            <person name="Larimer F.W."/>
            <person name="Malfatti S.A."/>
            <person name="Klotz M.G."/>
            <person name="Bottomley P.J."/>
            <person name="Arp D.J."/>
            <person name="Hickey W.J."/>
        </authorList>
    </citation>
    <scope>NUCLEOTIDE SEQUENCE [LARGE SCALE GENOMIC DNA]</scope>
    <source>
        <strain>ATCC 25391 / DSM 10237 / CIP 104748 / NCIMB 11846 / Nb-255</strain>
    </source>
</reference>
<proteinExistence type="inferred from homology"/>
<protein>
    <recommendedName>
        <fullName evidence="2">Small ribosomal subunit protein uS12</fullName>
    </recommendedName>
    <alternativeName>
        <fullName evidence="3">30S ribosomal protein S12</fullName>
    </alternativeName>
</protein>
<gene>
    <name evidence="2" type="primary">rpsL</name>
    <name type="ordered locus">Nwi_1359</name>
</gene>
<comment type="function">
    <text evidence="2">With S4 and S5 plays an important role in translational accuracy.</text>
</comment>
<comment type="function">
    <text evidence="2">Interacts with and stabilizes bases of the 16S rRNA that are involved in tRNA selection in the A site and with the mRNA backbone. Located at the interface of the 30S and 50S subunits, it traverses the body of the 30S subunit contacting proteins on the other side and probably holding the rRNA structure together. The combined cluster of proteins S8, S12 and S17 appears to hold together the shoulder and platform of the 30S subunit.</text>
</comment>
<comment type="subunit">
    <text evidence="2">Part of the 30S ribosomal subunit. Contacts proteins S8 and S17. May interact with IF1 in the 30S initiation complex.</text>
</comment>
<comment type="similarity">
    <text evidence="2">Belongs to the universal ribosomal protein uS12 family.</text>
</comment>
<evidence type="ECO:0000250" key="1"/>
<evidence type="ECO:0000255" key="2">
    <source>
        <dbReference type="HAMAP-Rule" id="MF_00403"/>
    </source>
</evidence>
<evidence type="ECO:0000305" key="3"/>
<sequence length="123" mass="13862">MPTINQLIASPRVLQKSRKKVPALQQSPQKRGVCTRVYTTTPKKPNSALRKVAKVRLTNGFEVIGYIPGEGHNLQEHSVVMIRGGRVKDLPGVRYHILRGVLDTQGVKNRKQRRSKYGAKRPK</sequence>
<accession>Q3SSX1</accession>
<feature type="chain" id="PRO_0000226398" description="Small ribosomal subunit protein uS12">
    <location>
        <begin position="1"/>
        <end position="123"/>
    </location>
</feature>
<feature type="modified residue" description="3-methylthioaspartic acid" evidence="1">
    <location>
        <position position="89"/>
    </location>
</feature>